<keyword id="KW-1185">Reference proteome</keyword>
<keyword id="KW-0687">Ribonucleoprotein</keyword>
<keyword id="KW-0689">Ribosomal protein</keyword>
<keyword id="KW-0694">RNA-binding</keyword>
<keyword id="KW-0699">rRNA-binding</keyword>
<feature type="chain" id="PRO_1000005298" description="Small ribosomal subunit protein bS6">
    <location>
        <begin position="1"/>
        <end position="96"/>
    </location>
</feature>
<reference key="1">
    <citation type="journal article" date="2008" name="PLoS ONE">
        <title>Genetic basis of virulence attenuation revealed by comparative genomic analysis of Mycobacterium tuberculosis strain H37Ra versus H37Rv.</title>
        <authorList>
            <person name="Zheng H."/>
            <person name="Lu L."/>
            <person name="Wang B."/>
            <person name="Pu S."/>
            <person name="Zhang X."/>
            <person name="Zhu G."/>
            <person name="Shi W."/>
            <person name="Zhang L."/>
            <person name="Wang H."/>
            <person name="Wang S."/>
            <person name="Zhao G."/>
            <person name="Zhang Y."/>
        </authorList>
    </citation>
    <scope>NUCLEOTIDE SEQUENCE [LARGE SCALE GENOMIC DNA]</scope>
    <source>
        <strain>ATCC 25177 / H37Ra</strain>
    </source>
</reference>
<accession>A5TYC4</accession>
<comment type="function">
    <text evidence="1">Binds together with bS18 to 16S ribosomal RNA.</text>
</comment>
<comment type="similarity">
    <text evidence="1">Belongs to the bacterial ribosomal protein bS6 family.</text>
</comment>
<proteinExistence type="inferred from homology"/>
<sequence>MRPYEIMVILDPTLDERTVAPSLETFLNVVRKDGGKVEKVDIWGKRRLAYEIAKHAEGIYVVIDVKAAPATVSELDRQLSLNESVLRTKVMRTDKH</sequence>
<name>RS6_MYCTA</name>
<organism>
    <name type="scientific">Mycobacterium tuberculosis (strain ATCC 25177 / H37Ra)</name>
    <dbReference type="NCBI Taxonomy" id="419947"/>
    <lineage>
        <taxon>Bacteria</taxon>
        <taxon>Bacillati</taxon>
        <taxon>Actinomycetota</taxon>
        <taxon>Actinomycetes</taxon>
        <taxon>Mycobacteriales</taxon>
        <taxon>Mycobacteriaceae</taxon>
        <taxon>Mycobacterium</taxon>
        <taxon>Mycobacterium tuberculosis complex</taxon>
    </lineage>
</organism>
<evidence type="ECO:0000255" key="1">
    <source>
        <dbReference type="HAMAP-Rule" id="MF_00360"/>
    </source>
</evidence>
<evidence type="ECO:0000305" key="2"/>
<dbReference type="EMBL" id="CP000611">
    <property type="protein sequence ID" value="ABQ71774.1"/>
    <property type="molecule type" value="Genomic_DNA"/>
</dbReference>
<dbReference type="RefSeq" id="WP_003400520.1">
    <property type="nucleotide sequence ID" value="NZ_CP016972.1"/>
</dbReference>
<dbReference type="SMR" id="A5TYC4"/>
<dbReference type="GeneID" id="45424012"/>
<dbReference type="KEGG" id="mra:MRA_0056"/>
<dbReference type="eggNOG" id="COG0360">
    <property type="taxonomic scope" value="Bacteria"/>
</dbReference>
<dbReference type="HOGENOM" id="CLU_113441_5_3_11"/>
<dbReference type="Proteomes" id="UP000001988">
    <property type="component" value="Chromosome"/>
</dbReference>
<dbReference type="GO" id="GO:0005737">
    <property type="term" value="C:cytoplasm"/>
    <property type="evidence" value="ECO:0007669"/>
    <property type="project" value="UniProtKB-ARBA"/>
</dbReference>
<dbReference type="GO" id="GO:1990904">
    <property type="term" value="C:ribonucleoprotein complex"/>
    <property type="evidence" value="ECO:0007669"/>
    <property type="project" value="UniProtKB-KW"/>
</dbReference>
<dbReference type="GO" id="GO:0005840">
    <property type="term" value="C:ribosome"/>
    <property type="evidence" value="ECO:0007669"/>
    <property type="project" value="UniProtKB-KW"/>
</dbReference>
<dbReference type="GO" id="GO:0070181">
    <property type="term" value="F:small ribosomal subunit rRNA binding"/>
    <property type="evidence" value="ECO:0007669"/>
    <property type="project" value="TreeGrafter"/>
</dbReference>
<dbReference type="GO" id="GO:0003735">
    <property type="term" value="F:structural constituent of ribosome"/>
    <property type="evidence" value="ECO:0007669"/>
    <property type="project" value="InterPro"/>
</dbReference>
<dbReference type="GO" id="GO:0006412">
    <property type="term" value="P:translation"/>
    <property type="evidence" value="ECO:0007669"/>
    <property type="project" value="UniProtKB-UniRule"/>
</dbReference>
<dbReference type="CDD" id="cd00473">
    <property type="entry name" value="bS6"/>
    <property type="match status" value="1"/>
</dbReference>
<dbReference type="FunFam" id="3.30.70.60:FF:000002">
    <property type="entry name" value="30S ribosomal protein S6"/>
    <property type="match status" value="1"/>
</dbReference>
<dbReference type="Gene3D" id="3.30.70.60">
    <property type="match status" value="1"/>
</dbReference>
<dbReference type="HAMAP" id="MF_00360">
    <property type="entry name" value="Ribosomal_bS6"/>
    <property type="match status" value="1"/>
</dbReference>
<dbReference type="InterPro" id="IPR000529">
    <property type="entry name" value="Ribosomal_bS6"/>
</dbReference>
<dbReference type="InterPro" id="IPR020815">
    <property type="entry name" value="Ribosomal_bS6_CS"/>
</dbReference>
<dbReference type="InterPro" id="IPR035980">
    <property type="entry name" value="Ribosomal_bS6_sf"/>
</dbReference>
<dbReference type="InterPro" id="IPR020814">
    <property type="entry name" value="Ribosomal_S6_plastid/chlpt"/>
</dbReference>
<dbReference type="InterPro" id="IPR014717">
    <property type="entry name" value="Transl_elong_EF1B/ribsomal_bS6"/>
</dbReference>
<dbReference type="NCBIfam" id="TIGR00166">
    <property type="entry name" value="S6"/>
    <property type="match status" value="1"/>
</dbReference>
<dbReference type="PANTHER" id="PTHR21011">
    <property type="entry name" value="MITOCHONDRIAL 28S RIBOSOMAL PROTEIN S6"/>
    <property type="match status" value="1"/>
</dbReference>
<dbReference type="PANTHER" id="PTHR21011:SF1">
    <property type="entry name" value="SMALL RIBOSOMAL SUBUNIT PROTEIN BS6M"/>
    <property type="match status" value="1"/>
</dbReference>
<dbReference type="Pfam" id="PF01250">
    <property type="entry name" value="Ribosomal_S6"/>
    <property type="match status" value="1"/>
</dbReference>
<dbReference type="SUPFAM" id="SSF54995">
    <property type="entry name" value="Ribosomal protein S6"/>
    <property type="match status" value="1"/>
</dbReference>
<dbReference type="PROSITE" id="PS01048">
    <property type="entry name" value="RIBOSOMAL_S6"/>
    <property type="match status" value="1"/>
</dbReference>
<protein>
    <recommendedName>
        <fullName evidence="1">Small ribosomal subunit protein bS6</fullName>
    </recommendedName>
    <alternativeName>
        <fullName evidence="2">30S ribosomal protein S6</fullName>
    </alternativeName>
</protein>
<gene>
    <name evidence="1" type="primary">rpsF</name>
    <name type="ordered locus">MRA_0056</name>
</gene>